<name>VAMP5_BOVIN</name>
<organism>
    <name type="scientific">Bos taurus</name>
    <name type="common">Bovine</name>
    <dbReference type="NCBI Taxonomy" id="9913"/>
    <lineage>
        <taxon>Eukaryota</taxon>
        <taxon>Metazoa</taxon>
        <taxon>Chordata</taxon>
        <taxon>Craniata</taxon>
        <taxon>Vertebrata</taxon>
        <taxon>Euteleostomi</taxon>
        <taxon>Mammalia</taxon>
        <taxon>Eutheria</taxon>
        <taxon>Laurasiatheria</taxon>
        <taxon>Artiodactyla</taxon>
        <taxon>Ruminantia</taxon>
        <taxon>Pecora</taxon>
        <taxon>Bovidae</taxon>
        <taxon>Bovinae</taxon>
        <taxon>Bos</taxon>
    </lineage>
</organism>
<accession>Q2KHY2</accession>
<dbReference type="EMBL" id="BC112840">
    <property type="protein sequence ID" value="AAI12841.1"/>
    <property type="molecule type" value="mRNA"/>
</dbReference>
<dbReference type="RefSeq" id="NP_001039941.1">
    <property type="nucleotide sequence ID" value="NM_001046476.1"/>
</dbReference>
<dbReference type="SMR" id="Q2KHY2"/>
<dbReference type="FunCoup" id="Q2KHY2">
    <property type="interactions" value="129"/>
</dbReference>
<dbReference type="STRING" id="9913.ENSBTAP00000059029"/>
<dbReference type="PaxDb" id="9913-ENSBTAP00000024333"/>
<dbReference type="Ensembl" id="ENSBTAT00000024333.4">
    <property type="protein sequence ID" value="ENSBTAP00000024333.3"/>
    <property type="gene ID" value="ENSBTAG00000018285.5"/>
</dbReference>
<dbReference type="GeneID" id="540406"/>
<dbReference type="KEGG" id="bta:540406"/>
<dbReference type="CTD" id="10791"/>
<dbReference type="VEuPathDB" id="HostDB:ENSBTAG00000018285"/>
<dbReference type="VGNC" id="VGNC:36759">
    <property type="gene designation" value="VAMP5"/>
</dbReference>
<dbReference type="eggNOG" id="KOG0860">
    <property type="taxonomic scope" value="Eukaryota"/>
</dbReference>
<dbReference type="GeneTree" id="ENSGT00730000111371"/>
<dbReference type="HOGENOM" id="CLU_064620_4_2_1"/>
<dbReference type="InParanoid" id="Q2KHY2"/>
<dbReference type="OMA" id="VRCRIYL"/>
<dbReference type="OrthoDB" id="190375at2759"/>
<dbReference type="TreeFam" id="TF313666"/>
<dbReference type="Proteomes" id="UP000009136">
    <property type="component" value="Chromosome 11"/>
</dbReference>
<dbReference type="Bgee" id="ENSBTAG00000018285">
    <property type="expression patterns" value="Expressed in tongue muscle and 105 other cell types or tissues"/>
</dbReference>
<dbReference type="GO" id="GO:0005794">
    <property type="term" value="C:Golgi apparatus"/>
    <property type="evidence" value="ECO:0007669"/>
    <property type="project" value="UniProtKB-SubCell"/>
</dbReference>
<dbReference type="GO" id="GO:0005886">
    <property type="term" value="C:plasma membrane"/>
    <property type="evidence" value="ECO:0000318"/>
    <property type="project" value="GO_Central"/>
</dbReference>
<dbReference type="GO" id="GO:0030154">
    <property type="term" value="P:cell differentiation"/>
    <property type="evidence" value="ECO:0007669"/>
    <property type="project" value="UniProtKB-KW"/>
</dbReference>
<dbReference type="GO" id="GO:0043001">
    <property type="term" value="P:Golgi to plasma membrane protein transport"/>
    <property type="evidence" value="ECO:0000318"/>
    <property type="project" value="GO_Central"/>
</dbReference>
<dbReference type="GO" id="GO:0007517">
    <property type="term" value="P:muscle organ development"/>
    <property type="evidence" value="ECO:0007669"/>
    <property type="project" value="UniProtKB-KW"/>
</dbReference>
<dbReference type="CDD" id="cd15872">
    <property type="entry name" value="R-SNARE_VAMP5"/>
    <property type="match status" value="1"/>
</dbReference>
<dbReference type="FunFam" id="1.20.5.110:FF:000064">
    <property type="entry name" value="Vesicle associated membrane protein 5"/>
    <property type="match status" value="1"/>
</dbReference>
<dbReference type="Gene3D" id="1.20.5.110">
    <property type="match status" value="1"/>
</dbReference>
<dbReference type="InterPro" id="IPR001388">
    <property type="entry name" value="Synaptobrevin-like"/>
</dbReference>
<dbReference type="InterPro" id="IPR042855">
    <property type="entry name" value="V_SNARE_CC"/>
</dbReference>
<dbReference type="InterPro" id="IPR042166">
    <property type="entry name" value="Vamp5"/>
</dbReference>
<dbReference type="InterPro" id="IPR042581">
    <property type="entry name" value="VAMP5_R-SNARE"/>
</dbReference>
<dbReference type="PANTHER" id="PTHR47462">
    <property type="entry name" value="VESICLE-ASSOCIATED MEMBRANE PROTEIN 5"/>
    <property type="match status" value="1"/>
</dbReference>
<dbReference type="PANTHER" id="PTHR47462:SF1">
    <property type="entry name" value="VESICLE-ASSOCIATED MEMBRANE PROTEIN 5"/>
    <property type="match status" value="1"/>
</dbReference>
<dbReference type="Pfam" id="PF00957">
    <property type="entry name" value="Synaptobrevin"/>
    <property type="match status" value="1"/>
</dbReference>
<dbReference type="PRINTS" id="PR00219">
    <property type="entry name" value="SYNAPTOBREVN"/>
</dbReference>
<dbReference type="SUPFAM" id="SSF58038">
    <property type="entry name" value="SNARE fusion complex"/>
    <property type="match status" value="1"/>
</dbReference>
<dbReference type="PROSITE" id="PS00417">
    <property type="entry name" value="SYNAPTOBREVIN"/>
    <property type="match status" value="1"/>
</dbReference>
<dbReference type="PROSITE" id="PS50892">
    <property type="entry name" value="V_SNARE"/>
    <property type="match status" value="1"/>
</dbReference>
<sequence length="116" mass="12778">MAGKELERCQRQADEVTEIMLNNFDKVLERDGKLAELEQRSDQLLDMSSAFSKTTKTLAQKKRWENARCRIYMGLAVGIALLILLIVLLVIFLPQSSKGSSAPQVQDAGPASGPGE</sequence>
<feature type="chain" id="PRO_0000273717" description="Vesicle-associated membrane protein 5">
    <location>
        <begin position="1"/>
        <end position="116"/>
    </location>
</feature>
<feature type="topological domain" description="Cytoplasmic" evidence="4">
    <location>
        <begin position="1"/>
        <end position="72"/>
    </location>
</feature>
<feature type="transmembrane region" description="Helical; Anchor for type IV membrane protein" evidence="4">
    <location>
        <begin position="73"/>
        <end position="93"/>
    </location>
</feature>
<feature type="topological domain" description="Vesicular" evidence="4">
    <location>
        <begin position="94"/>
        <end position="116"/>
    </location>
</feature>
<feature type="domain" description="v-SNARE coiled-coil homology" evidence="5">
    <location>
        <begin position="5"/>
        <end position="65"/>
    </location>
</feature>
<feature type="region of interest" description="Disordered" evidence="6">
    <location>
        <begin position="97"/>
        <end position="116"/>
    </location>
</feature>
<feature type="modified residue" description="Phosphoserine" evidence="3">
    <location>
        <position position="41"/>
    </location>
</feature>
<feature type="modified residue" description="Phosphoserine" evidence="2">
    <location>
        <position position="48"/>
    </location>
</feature>
<feature type="modified residue" description="Phosphoserine" evidence="2">
    <location>
        <position position="49"/>
    </location>
</feature>
<reference key="1">
    <citation type="submission" date="2006-01" db="EMBL/GenBank/DDBJ databases">
        <authorList>
            <consortium name="NIH - Mammalian Gene Collection (MGC) project"/>
        </authorList>
    </citation>
    <scope>NUCLEOTIDE SEQUENCE [LARGE SCALE MRNA]</scope>
    <source>
        <strain>Hereford</strain>
        <tissue>Hypothalamus</tissue>
    </source>
</reference>
<gene>
    <name type="primary">VAMP5</name>
</gene>
<comment type="function">
    <text evidence="1">May participate in trafficking events that are associated with myogenesis, such as myoblast fusion and/or GLUT4 trafficking.</text>
</comment>
<comment type="subcellular location">
    <subcellularLocation>
        <location evidence="7">Cell membrane</location>
        <topology evidence="7">Single-pass type IV membrane protein</topology>
    </subcellularLocation>
    <subcellularLocation>
        <location evidence="7">Endomembrane system</location>
        <topology evidence="7">Single-pass type IV membrane protein</topology>
    </subcellularLocation>
    <subcellularLocation>
        <location evidence="7">Golgi apparatus</location>
        <location evidence="7">trans-Golgi network membrane</location>
        <topology evidence="7">Single-pass type IV membrane protein</topology>
    </subcellularLocation>
    <text evidence="1">Associated with the plasma membrane as well as intracellular perinuclear and peripheral vesicular structures of myotubes. Associated with the trans-Golgi, but not with the cis-Golgi apparatus (By similarity).</text>
</comment>
<comment type="similarity">
    <text evidence="7">Belongs to the synaptobrevin family.</text>
</comment>
<evidence type="ECO:0000250" key="1"/>
<evidence type="ECO:0000250" key="2">
    <source>
        <dbReference type="UniProtKB" id="O95183"/>
    </source>
</evidence>
<evidence type="ECO:0000250" key="3">
    <source>
        <dbReference type="UniProtKB" id="Q9Z2P8"/>
    </source>
</evidence>
<evidence type="ECO:0000255" key="4"/>
<evidence type="ECO:0000255" key="5">
    <source>
        <dbReference type="PROSITE-ProRule" id="PRU00290"/>
    </source>
</evidence>
<evidence type="ECO:0000256" key="6">
    <source>
        <dbReference type="SAM" id="MobiDB-lite"/>
    </source>
</evidence>
<evidence type="ECO:0000305" key="7"/>
<protein>
    <recommendedName>
        <fullName>Vesicle-associated membrane protein 5</fullName>
        <shortName>VAMP-5</shortName>
    </recommendedName>
</protein>
<proteinExistence type="inferred from homology"/>
<keyword id="KW-1003">Cell membrane</keyword>
<keyword id="KW-0175">Coiled coil</keyword>
<keyword id="KW-0217">Developmental protein</keyword>
<keyword id="KW-0221">Differentiation</keyword>
<keyword id="KW-0333">Golgi apparatus</keyword>
<keyword id="KW-0472">Membrane</keyword>
<keyword id="KW-0517">Myogenesis</keyword>
<keyword id="KW-0597">Phosphoprotein</keyword>
<keyword id="KW-1185">Reference proteome</keyword>
<keyword id="KW-0812">Transmembrane</keyword>
<keyword id="KW-1133">Transmembrane helix</keyword>